<organism>
    <name type="scientific">Shewanella frigidimarina (strain NCIMB 400)</name>
    <dbReference type="NCBI Taxonomy" id="318167"/>
    <lineage>
        <taxon>Bacteria</taxon>
        <taxon>Pseudomonadati</taxon>
        <taxon>Pseudomonadota</taxon>
        <taxon>Gammaproteobacteria</taxon>
        <taxon>Alteromonadales</taxon>
        <taxon>Shewanellaceae</taxon>
        <taxon>Shewanella</taxon>
    </lineage>
</organism>
<proteinExistence type="inferred from homology"/>
<accession>Q07Z51</accession>
<sequence length="92" mass="10763">MARTVHCQHLNKSADGLDFQLYPGELGKRIFDNIGKEAWGLWQKKQTMLINEKKLNMMNVDDRKFLEEQMTNFLFEGKDVEIEGYVPPAEDE</sequence>
<keyword id="KW-0408">Iron</keyword>
<keyword id="KW-1185">Reference proteome</keyword>
<comment type="function">
    <text evidence="1">Could be a mediator in iron transactions between iron acquisition and iron-requiring processes, such as synthesis and/or repair of Fe-S clusters in biosynthetic enzymes.</text>
</comment>
<comment type="similarity">
    <text evidence="1">Belongs to the Fe(2+)-trafficking protein family.</text>
</comment>
<name>FETP_SHEFN</name>
<evidence type="ECO:0000255" key="1">
    <source>
        <dbReference type="HAMAP-Rule" id="MF_00686"/>
    </source>
</evidence>
<protein>
    <recommendedName>
        <fullName evidence="1">Probable Fe(2+)-trafficking protein</fullName>
    </recommendedName>
</protein>
<gene>
    <name type="ordered locus">Sfri_2874</name>
</gene>
<feature type="chain" id="PRO_1000045064" description="Probable Fe(2+)-trafficking protein">
    <location>
        <begin position="1"/>
        <end position="92"/>
    </location>
</feature>
<dbReference type="EMBL" id="CP000447">
    <property type="protein sequence ID" value="ABI72713.1"/>
    <property type="molecule type" value="Genomic_DNA"/>
</dbReference>
<dbReference type="RefSeq" id="WP_011638322.1">
    <property type="nucleotide sequence ID" value="NC_008345.1"/>
</dbReference>
<dbReference type="SMR" id="Q07Z51"/>
<dbReference type="STRING" id="318167.Sfri_2874"/>
<dbReference type="KEGG" id="sfr:Sfri_2874"/>
<dbReference type="eggNOG" id="COG2924">
    <property type="taxonomic scope" value="Bacteria"/>
</dbReference>
<dbReference type="HOGENOM" id="CLU_170994_0_0_6"/>
<dbReference type="OrthoDB" id="9804318at2"/>
<dbReference type="Proteomes" id="UP000000684">
    <property type="component" value="Chromosome"/>
</dbReference>
<dbReference type="GO" id="GO:0005829">
    <property type="term" value="C:cytosol"/>
    <property type="evidence" value="ECO:0007669"/>
    <property type="project" value="TreeGrafter"/>
</dbReference>
<dbReference type="GO" id="GO:0005506">
    <property type="term" value="F:iron ion binding"/>
    <property type="evidence" value="ECO:0007669"/>
    <property type="project" value="UniProtKB-UniRule"/>
</dbReference>
<dbReference type="GO" id="GO:0034599">
    <property type="term" value="P:cellular response to oxidative stress"/>
    <property type="evidence" value="ECO:0007669"/>
    <property type="project" value="TreeGrafter"/>
</dbReference>
<dbReference type="FunFam" id="1.10.3880.10:FF:000001">
    <property type="entry name" value="Probable Fe(2+)-trafficking protein"/>
    <property type="match status" value="1"/>
</dbReference>
<dbReference type="Gene3D" id="1.10.3880.10">
    <property type="entry name" value="Fe(II) trafficking protein YggX"/>
    <property type="match status" value="1"/>
</dbReference>
<dbReference type="HAMAP" id="MF_00686">
    <property type="entry name" value="Fe_traffic_YggX"/>
    <property type="match status" value="1"/>
</dbReference>
<dbReference type="InterPro" id="IPR007457">
    <property type="entry name" value="Fe_traffick_prot_YggX"/>
</dbReference>
<dbReference type="InterPro" id="IPR036766">
    <property type="entry name" value="Fe_traffick_prot_YggX_sf"/>
</dbReference>
<dbReference type="NCBIfam" id="NF003817">
    <property type="entry name" value="PRK05408.1"/>
    <property type="match status" value="1"/>
</dbReference>
<dbReference type="PANTHER" id="PTHR36965">
    <property type="entry name" value="FE(2+)-TRAFFICKING PROTEIN-RELATED"/>
    <property type="match status" value="1"/>
</dbReference>
<dbReference type="PANTHER" id="PTHR36965:SF1">
    <property type="entry name" value="FE(2+)-TRAFFICKING PROTEIN-RELATED"/>
    <property type="match status" value="1"/>
</dbReference>
<dbReference type="Pfam" id="PF04362">
    <property type="entry name" value="Iron_traffic"/>
    <property type="match status" value="1"/>
</dbReference>
<dbReference type="PIRSF" id="PIRSF029827">
    <property type="entry name" value="Fe_traffic_YggX"/>
    <property type="match status" value="1"/>
</dbReference>
<dbReference type="SUPFAM" id="SSF111148">
    <property type="entry name" value="YggX-like"/>
    <property type="match status" value="1"/>
</dbReference>
<reference key="1">
    <citation type="submission" date="2006-08" db="EMBL/GenBank/DDBJ databases">
        <title>Complete sequence of Shewanella frigidimarina NCIMB 400.</title>
        <authorList>
            <consortium name="US DOE Joint Genome Institute"/>
            <person name="Copeland A."/>
            <person name="Lucas S."/>
            <person name="Lapidus A."/>
            <person name="Barry K."/>
            <person name="Detter J.C."/>
            <person name="Glavina del Rio T."/>
            <person name="Hammon N."/>
            <person name="Israni S."/>
            <person name="Dalin E."/>
            <person name="Tice H."/>
            <person name="Pitluck S."/>
            <person name="Fredrickson J.K."/>
            <person name="Kolker E."/>
            <person name="McCuel L.A."/>
            <person name="DiChristina T."/>
            <person name="Nealson K.H."/>
            <person name="Newman D."/>
            <person name="Tiedje J.M."/>
            <person name="Zhou J."/>
            <person name="Romine M.F."/>
            <person name="Culley D.E."/>
            <person name="Serres M."/>
            <person name="Chertkov O."/>
            <person name="Brettin T."/>
            <person name="Bruce D."/>
            <person name="Han C."/>
            <person name="Tapia R."/>
            <person name="Gilna P."/>
            <person name="Schmutz J."/>
            <person name="Larimer F."/>
            <person name="Land M."/>
            <person name="Hauser L."/>
            <person name="Kyrpides N."/>
            <person name="Mikhailova N."/>
            <person name="Richardson P."/>
        </authorList>
    </citation>
    <scope>NUCLEOTIDE SEQUENCE [LARGE SCALE GENOMIC DNA]</scope>
    <source>
        <strain>NCIMB 400</strain>
    </source>
</reference>